<comment type="function">
    <text evidence="2">Catalyzes the formation of phosphoribosylamine from phosphoribosylpyrophosphate (PRPP) and glutamine. Can also use NH(3) in place of glutamine.</text>
</comment>
<comment type="catalytic activity">
    <reaction evidence="1 2">
        <text>5-phospho-beta-D-ribosylamine + L-glutamate + diphosphate = 5-phospho-alpha-D-ribose 1-diphosphate + L-glutamine + H2O</text>
        <dbReference type="Rhea" id="RHEA:14905"/>
        <dbReference type="ChEBI" id="CHEBI:15377"/>
        <dbReference type="ChEBI" id="CHEBI:29985"/>
        <dbReference type="ChEBI" id="CHEBI:33019"/>
        <dbReference type="ChEBI" id="CHEBI:58017"/>
        <dbReference type="ChEBI" id="CHEBI:58359"/>
        <dbReference type="ChEBI" id="CHEBI:58681"/>
        <dbReference type="EC" id="2.4.2.14"/>
    </reaction>
</comment>
<comment type="cofactor">
    <cofactor evidence="1">
        <name>Mg(2+)</name>
        <dbReference type="ChEBI" id="CHEBI:18420"/>
    </cofactor>
    <text evidence="1">Binds 1 Mg(2+) ion per subunit.</text>
</comment>
<comment type="activity regulation">
    <text evidence="2">Inhibited by iodoacetamide and by the glutamine analogs chloroketone and DON.</text>
</comment>
<comment type="biophysicochemical properties">
    <kinetics>
        <KM evidence="2">0.067 mM for phosphoribosylpyrophosphate</KM>
        <KM evidence="2">1.7 mM for glutamine</KM>
        <KM evidence="2">8.8 mM for NH(3)</KM>
    </kinetics>
</comment>
<comment type="pathway">
    <text evidence="1 2">Purine metabolism; IMP biosynthesis via de novo pathway; N(1)-(5-phospho-D-ribosyl)glycinamide from 5-phospho-alpha-D-ribose 1-diphosphate: step 1/2.</text>
</comment>
<comment type="subunit">
    <text evidence="4">Homotetramer.</text>
</comment>
<comment type="similarity">
    <text evidence="1 8">In the C-terminal section; belongs to the purine/pyrimidine phosphoribosyltransferase family.</text>
</comment>
<proteinExistence type="evidence at protein level"/>
<sequence length="505" mass="56488">MCGIVGIAGVMPVNQSIYDALTVLQHRGQDAAGIITIDANNCFRLRKANGLVSDVFEARHMQRLQGNMGIGHVRYPTAGSSSASEAQPFYVNSPYGITLAHNGNLTNAHELRKKLFEEKRRHINTTSDSEILLNIFASELDNFRHYPLEADNIFAAIAATNRLIRGAYACVAMIIGHGMVAFRDPNGIRPLVLGKRDIDENRTEYMVASESVALDTLGFDFLRDVAPGEAIYITEEGQLFTRQCADNPVSNPCLFEYVYFARPDSFIDKISVYSARVNMGTKLGEKIAREWEDLDIDVVIPIPETSCDIALEIARILGKPYRQGFVKNRYVGRTFIMPGQQLRRKSVRRKLNANRAEFRDKNVLLVDDSIVRGTTSEQIIEMAREAGAKKVYLASAAPEIRFPNVYGIDMPSATELIAHGREVDEIRQIIGADGLIFQDLNDLIDAVRAENPDIQQFECSVFNGVYVTKDVDQGYLDFLDTLRNDDAKAVQRQNEVENLEMHNEG</sequence>
<reference evidence="15" key="1">
    <citation type="journal article" date="1988" name="Nucleic Acids Res.">
        <title>Nucleotide sequence of the Escherichia coli purF gene encoding amidophosphoribosyltransferase for de novo purine nucleotide synthesis.</title>
        <authorList>
            <person name="Sampei G."/>
            <person name="Mizobuchi K."/>
        </authorList>
    </citation>
    <scope>NUCLEOTIDE SEQUENCE [GENOMIC DNA]</scope>
    <source>
        <strain>K12</strain>
    </source>
</reference>
<reference evidence="11" key="2">
    <citation type="journal article" date="1983" name="Adv. Enzyme Regul.">
        <title>Structure, function, and regulation of amidophosphoribosyltransferase from prokaryotes.</title>
        <authorList>
            <person name="Zalkin H."/>
        </authorList>
    </citation>
    <scope>NUCLEOTIDE SEQUENCE [GENOMIC DNA]</scope>
</reference>
<reference evidence="10 14" key="3">
    <citation type="journal article" date="1982" name="J. Biol. Chem.">
        <title>Nucleotide sequence of Escherichia coli purF and deduced amino acid sequence of glutamine phosphoribosylpyrophosphate amidotransferase.</title>
        <authorList>
            <person name="Tso J.Y."/>
            <person name="Zalkin H."/>
            <person name="van Cleemput M."/>
            <person name="Yanofsky C."/>
            <person name="Smith J.M."/>
        </authorList>
    </citation>
    <scope>NUCLEOTIDE SEQUENCE [GENOMIC DNA]</scope>
</reference>
<reference key="4">
    <citation type="journal article" date="1997" name="DNA Res.">
        <title>Construction of a contiguous 874-kb sequence of the Escherichia coli-K12 genome corresponding to 50.0-68.8 min on the linkage map and analysis of its sequence features.</title>
        <authorList>
            <person name="Yamamoto Y."/>
            <person name="Aiba H."/>
            <person name="Baba T."/>
            <person name="Hayashi K."/>
            <person name="Inada T."/>
            <person name="Isono K."/>
            <person name="Itoh T."/>
            <person name="Kimura S."/>
            <person name="Kitagawa M."/>
            <person name="Makino K."/>
            <person name="Miki T."/>
            <person name="Mitsuhashi N."/>
            <person name="Mizobuchi K."/>
            <person name="Mori H."/>
            <person name="Nakade S."/>
            <person name="Nakamura Y."/>
            <person name="Nashimoto H."/>
            <person name="Oshima T."/>
            <person name="Oyama S."/>
            <person name="Saito N."/>
            <person name="Sampei G."/>
            <person name="Satoh Y."/>
            <person name="Sivasundaram S."/>
            <person name="Tagami H."/>
            <person name="Takahashi H."/>
            <person name="Takeda J."/>
            <person name="Takemoto K."/>
            <person name="Uehara K."/>
            <person name="Wada C."/>
            <person name="Yamagata S."/>
            <person name="Horiuchi T."/>
        </authorList>
    </citation>
    <scope>NUCLEOTIDE SEQUENCE [LARGE SCALE GENOMIC DNA]</scope>
    <source>
        <strain>K12 / W3110 / ATCC 27325 / DSM 5911</strain>
    </source>
</reference>
<reference evidence="12" key="5">
    <citation type="journal article" date="1997" name="Science">
        <title>The complete genome sequence of Escherichia coli K-12.</title>
        <authorList>
            <person name="Blattner F.R."/>
            <person name="Plunkett G. III"/>
            <person name="Bloch C.A."/>
            <person name="Perna N.T."/>
            <person name="Burland V."/>
            <person name="Riley M."/>
            <person name="Collado-Vides J."/>
            <person name="Glasner J.D."/>
            <person name="Rode C.K."/>
            <person name="Mayhew G.F."/>
            <person name="Gregor J."/>
            <person name="Davis N.W."/>
            <person name="Kirkpatrick H.A."/>
            <person name="Goeden M.A."/>
            <person name="Rose D.J."/>
            <person name="Mau B."/>
            <person name="Shao Y."/>
        </authorList>
    </citation>
    <scope>NUCLEOTIDE SEQUENCE [LARGE SCALE GENOMIC DNA]</scope>
    <source>
        <strain>K12 / MG1655 / ATCC 47076</strain>
    </source>
</reference>
<reference evidence="13" key="6">
    <citation type="journal article" date="2006" name="Mol. Syst. Biol.">
        <title>Highly accurate genome sequences of Escherichia coli K-12 strains MG1655 and W3110.</title>
        <authorList>
            <person name="Hayashi K."/>
            <person name="Morooka N."/>
            <person name="Yamamoto Y."/>
            <person name="Fujita K."/>
            <person name="Isono K."/>
            <person name="Choi S."/>
            <person name="Ohtsubo E."/>
            <person name="Baba T."/>
            <person name="Wanner B.L."/>
            <person name="Mori H."/>
            <person name="Horiuchi T."/>
        </authorList>
    </citation>
    <scope>NUCLEOTIDE SEQUENCE [LARGE SCALE GENOMIC DNA]</scope>
    <source>
        <strain>K12 / W3110 / ATCC 27325 / DSM 5911</strain>
    </source>
</reference>
<reference evidence="9" key="7">
    <citation type="journal article" date="1987" name="J. Biol. Chem.">
        <title>The hisT-purF region of the Escherichia coli K-12 chromosome. Identification of additional genes of the hisT and purF operons.</title>
        <authorList>
            <person name="Nonet M.L."/>
            <person name="Marvel C.C."/>
            <person name="Tolan D.R."/>
        </authorList>
    </citation>
    <scope>NUCLEOTIDE SEQUENCE [GENOMIC DNA] OF 1-31 AND 483-505</scope>
    <source>
        <strain>K12</strain>
    </source>
</reference>
<reference key="8">
    <citation type="journal article" date="1982" name="J. Biol. Chem.">
        <title>Glutamine phosphoribosylpyrophosphate amidotransferase from cloned Escherichia coli purF. NH2-terminal amino acid sequence, identification of the glutamine site, and trace metal analysis.</title>
        <authorList>
            <person name="Tso J.Y."/>
            <person name="Hermodson M.A."/>
            <person name="Zalkin H."/>
        </authorList>
    </citation>
    <scope>PROTEIN SEQUENCE OF 2-24</scope>
    <scope>ACTIVE SITE</scope>
</reference>
<reference key="9">
    <citation type="journal article" date="1979" name="J. Biol. Chem.">
        <title>Glutamine phosphoribosylpyrophosphate amidotransferase from Escherichia coli. Purification and properties.</title>
        <authorList>
            <person name="Messenger L.J."/>
            <person name="Zalkin H."/>
        </authorList>
    </citation>
    <scope>FUNCTION</scope>
    <scope>CATALYTIC ACTIVITY</scope>
    <scope>ACTIVITY REGULATION</scope>
    <scope>BIOPHYSICOCHEMICAL PROPERTIES</scope>
    <scope>PATHWAY</scope>
</reference>
<reference key="10">
    <citation type="journal article" date="1997" name="Electrophoresis">
        <title>Escherichia coli proteome analysis using the gene-protein database.</title>
        <authorList>
            <person name="VanBogelen R.A."/>
            <person name="Abshire K.Z."/>
            <person name="Moldover B."/>
            <person name="Olson E.R."/>
            <person name="Neidhardt F.C."/>
        </authorList>
    </citation>
    <scope>IDENTIFICATION BY 2D-GEL</scope>
</reference>
<reference key="11">
    <citation type="journal article" date="1997" name="Biochemistry">
        <title>Coupled formation of an amidotransferase interdomain ammonia channel and a phosphoribosyltransferase active site.</title>
        <authorList>
            <person name="Krahn J.M."/>
            <person name="Kim J.H."/>
            <person name="Burns M.R."/>
            <person name="Parry R.J."/>
            <person name="Zalkin H."/>
            <person name="Smith J.L."/>
        </authorList>
    </citation>
    <scope>X-RAY CRYSTALLOGRAPHY (2.7 ANGSTROMS)</scope>
</reference>
<reference key="12">
    <citation type="journal article" date="1998" name="Protein Sci.">
        <title>Crystal structure of glutamine phosphoribosylpyrophosphate amidotransferase from Escherichia coli.</title>
        <authorList>
            <person name="Muchmore C.R.A."/>
            <person name="Krahn J.M."/>
            <person name="Kim J.H."/>
            <person name="Zalkin H."/>
            <person name="Smith J.L."/>
        </authorList>
    </citation>
    <scope>X-RAY CRYSTALLOGRAPHY (2.0 ANGSTROMS)</scope>
    <scope>SUBUNIT</scope>
</reference>
<protein>
    <recommendedName>
        <fullName evidence="1 6">Amidophosphoribosyltransferase</fullName>
        <shortName evidence="1">ATase</shortName>
        <ecNumber evidence="1 2">2.4.2.14</ecNumber>
    </recommendedName>
    <alternativeName>
        <fullName evidence="1 5">Glutamine phosphoribosylpyrophosphate amidotransferase</fullName>
        <shortName evidence="1 7">GPATase</shortName>
    </alternativeName>
</protein>
<feature type="initiator methionine" description="Removed" evidence="3">
    <location>
        <position position="1"/>
    </location>
</feature>
<feature type="chain" id="PRO_0000139638" description="Amidophosphoribosyltransferase">
    <location>
        <begin position="2"/>
        <end position="505"/>
    </location>
</feature>
<feature type="domain" description="Glutamine amidotransferase type-2" evidence="1">
    <location>
        <begin position="2"/>
        <end position="236"/>
    </location>
</feature>
<feature type="active site" description="Nucleophile" evidence="1 3">
    <location>
        <position position="2"/>
    </location>
</feature>
<feature type="binding site" evidence="1">
    <location>
        <position position="305"/>
    </location>
    <ligand>
        <name>Mg(2+)</name>
        <dbReference type="ChEBI" id="CHEBI:18420"/>
    </ligand>
</feature>
<feature type="binding site" evidence="1">
    <location>
        <position position="367"/>
    </location>
    <ligand>
        <name>Mg(2+)</name>
        <dbReference type="ChEBI" id="CHEBI:18420"/>
    </ligand>
</feature>
<feature type="binding site" evidence="1">
    <location>
        <position position="368"/>
    </location>
    <ligand>
        <name>Mg(2+)</name>
        <dbReference type="ChEBI" id="CHEBI:18420"/>
    </ligand>
</feature>
<feature type="sequence conflict" description="In Ref. 2; AAA24453 and 3; CAA23613/AAA24452." evidence="8" ref="2 3">
    <original>LR</original>
    <variation>SL</variation>
    <location>
        <begin position="45"/>
        <end position="46"/>
    </location>
</feature>
<feature type="sequence conflict" description="In Ref. 2; AAA24453 and 3; CAA23613/AAA24452." evidence="8" ref="2 3">
    <original>G</original>
    <variation>A</variation>
    <location>
        <position position="50"/>
    </location>
</feature>
<feature type="sequence conflict" description="In Ref. 2; AAA24453 and 3; CAA23613/AAA24452." evidence="8" ref="2 3">
    <original>ALDTLGFDFLRDVAPGEA</original>
    <variation>GSIRWALISCVTSRRAR</variation>
    <location>
        <begin position="213"/>
        <end position="230"/>
    </location>
</feature>
<feature type="sequence conflict" description="In Ref. 2; AAA24453 and 3; CAA23613/AAA24452." evidence="8" ref="2 3">
    <original>V</original>
    <variation>A</variation>
    <location>
        <position position="277"/>
    </location>
</feature>
<feature type="sequence conflict" description="In Ref. 2; AAA24453 and 3; CAA23613/AAA24452." evidence="8" ref="2 3">
    <original>L</original>
    <variation>V</variation>
    <location>
        <position position="283"/>
    </location>
</feature>
<feature type="sequence conflict" description="In Ref. 2; AAA24453." evidence="8" ref="2">
    <original>M</original>
    <variation>I</variation>
    <location>
        <position position="337"/>
    </location>
</feature>
<feature type="sequence conflict" description="In Ref. 1; CAA30971." evidence="8" ref="1">
    <original>A</original>
    <variation>R</variation>
    <location>
        <position position="386"/>
    </location>
</feature>
<feature type="sequence conflict" description="In Ref. 2; AAA24453 and 3; CAA23613/AAA24452." evidence="8" ref="2 3">
    <original>N</original>
    <variation>S</variation>
    <location>
        <position position="494"/>
    </location>
</feature>
<feature type="strand" evidence="19">
    <location>
        <begin position="3"/>
        <end position="8"/>
    </location>
</feature>
<feature type="helix" evidence="19">
    <location>
        <begin position="14"/>
        <end position="23"/>
    </location>
</feature>
<feature type="helix" evidence="19">
    <location>
        <begin position="25"/>
        <end position="27"/>
    </location>
</feature>
<feature type="strand" evidence="19">
    <location>
        <begin position="30"/>
        <end position="37"/>
    </location>
</feature>
<feature type="strand" evidence="19">
    <location>
        <begin position="43"/>
        <end position="50"/>
    </location>
</feature>
<feature type="helix" evidence="19">
    <location>
        <begin position="52"/>
        <end position="55"/>
    </location>
</feature>
<feature type="helix" evidence="19">
    <location>
        <begin position="58"/>
        <end position="63"/>
    </location>
</feature>
<feature type="strand" evidence="19">
    <location>
        <begin position="66"/>
        <end position="74"/>
    </location>
</feature>
<feature type="strand" evidence="18">
    <location>
        <begin position="78"/>
        <end position="80"/>
    </location>
</feature>
<feature type="helix" evidence="16">
    <location>
        <begin position="83"/>
        <end position="85"/>
    </location>
</feature>
<feature type="strand" evidence="19">
    <location>
        <begin position="89"/>
        <end position="91"/>
    </location>
</feature>
<feature type="strand" evidence="19">
    <location>
        <begin position="93"/>
        <end position="95"/>
    </location>
</feature>
<feature type="strand" evidence="19">
    <location>
        <begin position="97"/>
        <end position="105"/>
    </location>
</feature>
<feature type="helix" evidence="19">
    <location>
        <begin position="108"/>
        <end position="119"/>
    </location>
</feature>
<feature type="helix" evidence="19">
    <location>
        <begin position="128"/>
        <end position="140"/>
    </location>
</feature>
<feature type="strand" evidence="19">
    <location>
        <begin position="145"/>
        <end position="147"/>
    </location>
</feature>
<feature type="helix" evidence="19">
    <location>
        <begin position="150"/>
        <end position="163"/>
    </location>
</feature>
<feature type="strand" evidence="19">
    <location>
        <begin position="166"/>
        <end position="174"/>
    </location>
</feature>
<feature type="turn" evidence="19">
    <location>
        <begin position="175"/>
        <end position="177"/>
    </location>
</feature>
<feature type="strand" evidence="19">
    <location>
        <begin position="178"/>
        <end position="183"/>
    </location>
</feature>
<feature type="strand" evidence="19">
    <location>
        <begin position="192"/>
        <end position="197"/>
    </location>
</feature>
<feature type="strand" evidence="19">
    <location>
        <begin position="199"/>
        <end position="201"/>
    </location>
</feature>
<feature type="strand" evidence="19">
    <location>
        <begin position="203"/>
        <end position="210"/>
    </location>
</feature>
<feature type="helix" evidence="19">
    <location>
        <begin position="211"/>
        <end position="216"/>
    </location>
</feature>
<feature type="strand" evidence="19">
    <location>
        <begin position="220"/>
        <end position="224"/>
    </location>
</feature>
<feature type="strand" evidence="19">
    <location>
        <begin position="229"/>
        <end position="237"/>
    </location>
</feature>
<feature type="strand" evidence="19">
    <location>
        <begin position="239"/>
        <end position="243"/>
    </location>
</feature>
<feature type="strand" evidence="19">
    <location>
        <begin position="245"/>
        <end position="247"/>
    </location>
</feature>
<feature type="helix" evidence="19">
    <location>
        <begin position="254"/>
        <end position="258"/>
    </location>
</feature>
<feature type="strand" evidence="20">
    <location>
        <begin position="266"/>
        <end position="269"/>
    </location>
</feature>
<feature type="helix" evidence="19">
    <location>
        <begin position="272"/>
        <end position="290"/>
    </location>
</feature>
<feature type="turn" evidence="17">
    <location>
        <begin position="291"/>
        <end position="293"/>
    </location>
</feature>
<feature type="strand" evidence="19">
    <location>
        <begin position="298"/>
        <end position="301"/>
    </location>
</feature>
<feature type="turn" evidence="19">
    <location>
        <begin position="303"/>
        <end position="306"/>
    </location>
</feature>
<feature type="helix" evidence="19">
    <location>
        <begin position="307"/>
        <end position="317"/>
    </location>
</feature>
<feature type="strand" evidence="19">
    <location>
        <begin position="325"/>
        <end position="327"/>
    </location>
</feature>
<feature type="strand" evidence="17">
    <location>
        <begin position="338"/>
        <end position="340"/>
    </location>
</feature>
<feature type="helix" evidence="19">
    <location>
        <begin position="346"/>
        <end position="350"/>
    </location>
</feature>
<feature type="strand" evidence="19">
    <location>
        <begin position="351"/>
        <end position="353"/>
    </location>
</feature>
<feature type="helix" evidence="19">
    <location>
        <begin position="355"/>
        <end position="357"/>
    </location>
</feature>
<feature type="turn" evidence="19">
    <location>
        <begin position="358"/>
        <end position="360"/>
    </location>
</feature>
<feature type="strand" evidence="19">
    <location>
        <begin position="363"/>
        <end position="368"/>
    </location>
</feature>
<feature type="strand" evidence="19">
    <location>
        <begin position="371"/>
        <end position="373"/>
    </location>
</feature>
<feature type="helix" evidence="19">
    <location>
        <begin position="374"/>
        <end position="385"/>
    </location>
</feature>
<feature type="strand" evidence="19">
    <location>
        <begin position="389"/>
        <end position="397"/>
    </location>
</feature>
<feature type="strand" evidence="19">
    <location>
        <begin position="406"/>
        <end position="408"/>
    </location>
</feature>
<feature type="helix" evidence="19">
    <location>
        <begin position="413"/>
        <end position="415"/>
    </location>
</feature>
<feature type="turn" evidence="19">
    <location>
        <begin position="417"/>
        <end position="420"/>
    </location>
</feature>
<feature type="helix" evidence="19">
    <location>
        <begin position="423"/>
        <end position="430"/>
    </location>
</feature>
<feature type="strand" evidence="19">
    <location>
        <begin position="433"/>
        <end position="437"/>
    </location>
</feature>
<feature type="helix" evidence="19">
    <location>
        <begin position="440"/>
        <end position="448"/>
    </location>
</feature>
<feature type="helix" evidence="19">
    <location>
        <begin position="460"/>
        <end position="463"/>
    </location>
</feature>
<feature type="helix" evidence="19">
    <location>
        <begin position="473"/>
        <end position="498"/>
    </location>
</feature>
<evidence type="ECO:0000255" key="1">
    <source>
        <dbReference type="HAMAP-Rule" id="MF_01931"/>
    </source>
</evidence>
<evidence type="ECO:0000269" key="2">
    <source>
    </source>
</evidence>
<evidence type="ECO:0000269" key="3">
    <source>
    </source>
</evidence>
<evidence type="ECO:0000269" key="4">
    <source>
    </source>
</evidence>
<evidence type="ECO:0000303" key="5">
    <source>
    </source>
</evidence>
<evidence type="ECO:0000303" key="6">
    <source>
    </source>
</evidence>
<evidence type="ECO:0000303" key="7">
    <source>
    </source>
</evidence>
<evidence type="ECO:0000305" key="8"/>
<evidence type="ECO:0000312" key="9">
    <source>
        <dbReference type="EMBL" id="AAA23969.1"/>
    </source>
</evidence>
<evidence type="ECO:0000312" key="10">
    <source>
        <dbReference type="EMBL" id="AAA24452.1"/>
    </source>
</evidence>
<evidence type="ECO:0000312" key="11">
    <source>
        <dbReference type="EMBL" id="AAA24453.1"/>
    </source>
</evidence>
<evidence type="ECO:0000312" key="12">
    <source>
        <dbReference type="EMBL" id="AAC75372.1"/>
    </source>
</evidence>
<evidence type="ECO:0000312" key="13">
    <source>
        <dbReference type="EMBL" id="BAA16158.2"/>
    </source>
</evidence>
<evidence type="ECO:0000312" key="14">
    <source>
        <dbReference type="EMBL" id="CAA23613.1"/>
    </source>
</evidence>
<evidence type="ECO:0000312" key="15">
    <source>
        <dbReference type="EMBL" id="CAA30971.1"/>
    </source>
</evidence>
<evidence type="ECO:0007829" key="16">
    <source>
        <dbReference type="PDB" id="1ECC"/>
    </source>
</evidence>
<evidence type="ECO:0007829" key="17">
    <source>
        <dbReference type="PDB" id="1ECF"/>
    </source>
</evidence>
<evidence type="ECO:0007829" key="18">
    <source>
        <dbReference type="PDB" id="1ECJ"/>
    </source>
</evidence>
<evidence type="ECO:0007829" key="19">
    <source>
        <dbReference type="PDB" id="6CZF"/>
    </source>
</evidence>
<evidence type="ECO:0007829" key="20">
    <source>
        <dbReference type="PDB" id="8W7D"/>
    </source>
</evidence>
<organism>
    <name type="scientific">Escherichia coli (strain K12)</name>
    <dbReference type="NCBI Taxonomy" id="83333"/>
    <lineage>
        <taxon>Bacteria</taxon>
        <taxon>Pseudomonadati</taxon>
        <taxon>Pseudomonadota</taxon>
        <taxon>Gammaproteobacteria</taxon>
        <taxon>Enterobacterales</taxon>
        <taxon>Enterobacteriaceae</taxon>
        <taxon>Escherichia</taxon>
    </lineage>
</organism>
<dbReference type="EC" id="2.4.2.14" evidence="1 2"/>
<dbReference type="EMBL" id="X12423">
    <property type="protein sequence ID" value="CAA30971.1"/>
    <property type="molecule type" value="Genomic_DNA"/>
</dbReference>
<dbReference type="EMBL" id="V00322">
    <property type="protein sequence ID" value="CAA23613.1"/>
    <property type="molecule type" value="Genomic_DNA"/>
</dbReference>
<dbReference type="EMBL" id="M26893">
    <property type="protein sequence ID" value="AAA24453.1"/>
    <property type="molecule type" value="Genomic_DNA"/>
</dbReference>
<dbReference type="EMBL" id="J01666">
    <property type="protein sequence ID" value="AAA24452.1"/>
    <property type="molecule type" value="Genomic_DNA"/>
</dbReference>
<dbReference type="EMBL" id="U00096">
    <property type="protein sequence ID" value="AAC75372.1"/>
    <property type="molecule type" value="Genomic_DNA"/>
</dbReference>
<dbReference type="EMBL" id="AP009048">
    <property type="protein sequence ID" value="BAA16158.2"/>
    <property type="molecule type" value="Genomic_DNA"/>
</dbReference>
<dbReference type="EMBL" id="AH000881">
    <property type="protein sequence ID" value="AAA23969.1"/>
    <property type="status" value="ALT_SEQ"/>
    <property type="molecule type" value="Genomic_DNA"/>
</dbReference>
<dbReference type="PIR" id="F65003">
    <property type="entry name" value="XQEC"/>
</dbReference>
<dbReference type="RefSeq" id="NP_416815.1">
    <property type="nucleotide sequence ID" value="NC_000913.3"/>
</dbReference>
<dbReference type="RefSeq" id="WP_000334220.1">
    <property type="nucleotide sequence ID" value="NZ_STEB01000008.1"/>
</dbReference>
<dbReference type="PDB" id="1ECB">
    <property type="method" value="X-ray"/>
    <property type="resolution" value="2.70 A"/>
    <property type="chains" value="A/B/C/D=2-505"/>
</dbReference>
<dbReference type="PDB" id="1ECC">
    <property type="method" value="X-ray"/>
    <property type="resolution" value="2.40 A"/>
    <property type="chains" value="A/B=2-505"/>
</dbReference>
<dbReference type="PDB" id="1ECF">
    <property type="method" value="X-ray"/>
    <property type="resolution" value="2.00 A"/>
    <property type="chains" value="A/B=2-505"/>
</dbReference>
<dbReference type="PDB" id="1ECG">
    <property type="method" value="X-ray"/>
    <property type="resolution" value="2.30 A"/>
    <property type="chains" value="A/B=2-505"/>
</dbReference>
<dbReference type="PDB" id="1ECJ">
    <property type="method" value="X-ray"/>
    <property type="resolution" value="2.50 A"/>
    <property type="chains" value="A/B/C/D=2-505"/>
</dbReference>
<dbReference type="PDB" id="6CZF">
    <property type="method" value="X-ray"/>
    <property type="resolution" value="1.95 A"/>
    <property type="chains" value="A/B/C/D=2-499"/>
</dbReference>
<dbReference type="PDB" id="6OTT">
    <property type="method" value="X-ray"/>
    <property type="resolution" value="2.55 A"/>
    <property type="chains" value="A/B=2-505"/>
</dbReference>
<dbReference type="PDB" id="8W7D">
    <property type="method" value="X-ray"/>
    <property type="resolution" value="2.81 A"/>
    <property type="chains" value="A/B/C/D=1-505"/>
</dbReference>
<dbReference type="PDBsum" id="1ECB"/>
<dbReference type="PDBsum" id="1ECC"/>
<dbReference type="PDBsum" id="1ECF"/>
<dbReference type="PDBsum" id="1ECG"/>
<dbReference type="PDBsum" id="1ECJ"/>
<dbReference type="PDBsum" id="6CZF"/>
<dbReference type="PDBsum" id="6OTT"/>
<dbReference type="PDBsum" id="8W7D"/>
<dbReference type="SMR" id="P0AG16"/>
<dbReference type="BioGRID" id="4261075">
    <property type="interactions" value="8"/>
</dbReference>
<dbReference type="BioGRID" id="851135">
    <property type="interactions" value="4"/>
</dbReference>
<dbReference type="FunCoup" id="P0AG16">
    <property type="interactions" value="841"/>
</dbReference>
<dbReference type="STRING" id="511145.b2312"/>
<dbReference type="DrugBank" id="DB04296">
    <property type="generic name" value="5-Oxo-L-Norleucine"/>
</dbReference>
<dbReference type="DrugBank" id="DB03942">
    <property type="generic name" value="Carboxylic PRPP"/>
</dbReference>
<dbReference type="DrugBank" id="DB01972">
    <property type="generic name" value="Guanosine-5'-Monophosphate"/>
</dbReference>
<dbReference type="MEROPS" id="C44.001"/>
<dbReference type="jPOST" id="P0AG16"/>
<dbReference type="PaxDb" id="511145-b2312"/>
<dbReference type="EnsemblBacteria" id="AAC75372">
    <property type="protein sequence ID" value="AAC75372"/>
    <property type="gene ID" value="b2312"/>
</dbReference>
<dbReference type="GeneID" id="93774862"/>
<dbReference type="GeneID" id="946794"/>
<dbReference type="KEGG" id="ecj:JW2309"/>
<dbReference type="KEGG" id="eco:b2312"/>
<dbReference type="KEGG" id="ecoc:C3026_12890"/>
<dbReference type="PATRIC" id="fig|1411691.4.peg.4422"/>
<dbReference type="EchoBASE" id="EB0787"/>
<dbReference type="eggNOG" id="COG0034">
    <property type="taxonomic scope" value="Bacteria"/>
</dbReference>
<dbReference type="InParanoid" id="P0AG16"/>
<dbReference type="OMA" id="IRHFGVK"/>
<dbReference type="OrthoDB" id="9801213at2"/>
<dbReference type="PhylomeDB" id="P0AG16"/>
<dbReference type="BioCyc" id="EcoCyc:PRPPAMIDOTRANS-MONOMER"/>
<dbReference type="BioCyc" id="MetaCyc:PRPPAMIDOTRANS-MONOMER"/>
<dbReference type="BRENDA" id="2.4.2.14">
    <property type="organism ID" value="2026"/>
</dbReference>
<dbReference type="SABIO-RK" id="P0AG16"/>
<dbReference type="UniPathway" id="UPA00074">
    <property type="reaction ID" value="UER00124"/>
</dbReference>
<dbReference type="EvolutionaryTrace" id="P0AG16"/>
<dbReference type="PHI-base" id="PHI:8488"/>
<dbReference type="PRO" id="PR:P0AG16"/>
<dbReference type="Proteomes" id="UP000000625">
    <property type="component" value="Chromosome"/>
</dbReference>
<dbReference type="GO" id="GO:0005737">
    <property type="term" value="C:cytoplasm"/>
    <property type="evidence" value="ECO:0000314"/>
    <property type="project" value="EcoliWiki"/>
</dbReference>
<dbReference type="GO" id="GO:0005829">
    <property type="term" value="C:cytosol"/>
    <property type="evidence" value="ECO:0000314"/>
    <property type="project" value="EcoCyc"/>
</dbReference>
<dbReference type="GO" id="GO:0004044">
    <property type="term" value="F:amidophosphoribosyltransferase activity"/>
    <property type="evidence" value="ECO:0000314"/>
    <property type="project" value="EcoCyc"/>
</dbReference>
<dbReference type="GO" id="GO:0016757">
    <property type="term" value="F:glycosyltransferase activity"/>
    <property type="evidence" value="ECO:0000314"/>
    <property type="project" value="EcoliWiki"/>
</dbReference>
<dbReference type="GO" id="GO:0097216">
    <property type="term" value="F:guanosine tetraphosphate binding"/>
    <property type="evidence" value="ECO:0000314"/>
    <property type="project" value="EcoCyc"/>
</dbReference>
<dbReference type="GO" id="GO:0042802">
    <property type="term" value="F:identical protein binding"/>
    <property type="evidence" value="ECO:0000314"/>
    <property type="project" value="EcoCyc"/>
</dbReference>
<dbReference type="GO" id="GO:0000287">
    <property type="term" value="F:magnesium ion binding"/>
    <property type="evidence" value="ECO:0000314"/>
    <property type="project" value="EcoCyc"/>
</dbReference>
<dbReference type="GO" id="GO:0006189">
    <property type="term" value="P:'de novo' IMP biosynthetic process"/>
    <property type="evidence" value="ECO:0007669"/>
    <property type="project" value="UniProtKB-UniRule"/>
</dbReference>
<dbReference type="GO" id="GO:0006541">
    <property type="term" value="P:glutamine metabolic process"/>
    <property type="evidence" value="ECO:0000314"/>
    <property type="project" value="EcoliWiki"/>
</dbReference>
<dbReference type="GO" id="GO:0009113">
    <property type="term" value="P:purine nucleobase biosynthetic process"/>
    <property type="evidence" value="ECO:0007669"/>
    <property type="project" value="InterPro"/>
</dbReference>
<dbReference type="GO" id="GO:0006164">
    <property type="term" value="P:purine nucleotide biosynthetic process"/>
    <property type="evidence" value="ECO:0000314"/>
    <property type="project" value="EcoliWiki"/>
</dbReference>
<dbReference type="CDD" id="cd00715">
    <property type="entry name" value="GPATase_N"/>
    <property type="match status" value="1"/>
</dbReference>
<dbReference type="CDD" id="cd06223">
    <property type="entry name" value="PRTases_typeI"/>
    <property type="match status" value="1"/>
</dbReference>
<dbReference type="DisProt" id="DP00578"/>
<dbReference type="FunFam" id="3.60.20.10:FF:000011">
    <property type="entry name" value="Amidophosphoribosyltransferase"/>
    <property type="match status" value="1"/>
</dbReference>
<dbReference type="Gene3D" id="3.40.50.2020">
    <property type="match status" value="1"/>
</dbReference>
<dbReference type="Gene3D" id="3.60.20.10">
    <property type="entry name" value="Glutamine Phosphoribosylpyrophosphate, subunit 1, domain 1"/>
    <property type="match status" value="1"/>
</dbReference>
<dbReference type="HAMAP" id="MF_01931">
    <property type="entry name" value="PurF"/>
    <property type="match status" value="1"/>
</dbReference>
<dbReference type="InterPro" id="IPR017932">
    <property type="entry name" value="GATase_2_dom"/>
</dbReference>
<dbReference type="InterPro" id="IPR029055">
    <property type="entry name" value="Ntn_hydrolases_N"/>
</dbReference>
<dbReference type="InterPro" id="IPR000836">
    <property type="entry name" value="PRibTrfase_dom"/>
</dbReference>
<dbReference type="InterPro" id="IPR029057">
    <property type="entry name" value="PRTase-like"/>
</dbReference>
<dbReference type="InterPro" id="IPR005854">
    <property type="entry name" value="PurF"/>
</dbReference>
<dbReference type="InterPro" id="IPR035584">
    <property type="entry name" value="PurF_N"/>
</dbReference>
<dbReference type="NCBIfam" id="TIGR01134">
    <property type="entry name" value="purF"/>
    <property type="match status" value="1"/>
</dbReference>
<dbReference type="PANTHER" id="PTHR11907">
    <property type="entry name" value="AMIDOPHOSPHORIBOSYLTRANSFERASE"/>
    <property type="match status" value="1"/>
</dbReference>
<dbReference type="Pfam" id="PF13522">
    <property type="entry name" value="GATase_6"/>
    <property type="match status" value="1"/>
</dbReference>
<dbReference type="Pfam" id="PF00156">
    <property type="entry name" value="Pribosyltran"/>
    <property type="match status" value="1"/>
</dbReference>
<dbReference type="PIRSF" id="PIRSF000485">
    <property type="entry name" value="Amd_phspho_trans"/>
    <property type="match status" value="1"/>
</dbReference>
<dbReference type="SUPFAM" id="SSF56235">
    <property type="entry name" value="N-terminal nucleophile aminohydrolases (Ntn hydrolases)"/>
    <property type="match status" value="1"/>
</dbReference>
<dbReference type="SUPFAM" id="SSF53271">
    <property type="entry name" value="PRTase-like"/>
    <property type="match status" value="1"/>
</dbReference>
<dbReference type="PROSITE" id="PS51278">
    <property type="entry name" value="GATASE_TYPE_2"/>
    <property type="match status" value="1"/>
</dbReference>
<dbReference type="PROSITE" id="PS00103">
    <property type="entry name" value="PUR_PYR_PR_TRANSFER"/>
    <property type="match status" value="1"/>
</dbReference>
<name>PUR1_ECOLI</name>
<keyword id="KW-0002">3D-structure</keyword>
<keyword id="KW-0903">Direct protein sequencing</keyword>
<keyword id="KW-0315">Glutamine amidotransferase</keyword>
<keyword id="KW-0328">Glycosyltransferase</keyword>
<keyword id="KW-0460">Magnesium</keyword>
<keyword id="KW-0479">Metal-binding</keyword>
<keyword id="KW-0658">Purine biosynthesis</keyword>
<keyword id="KW-1185">Reference proteome</keyword>
<keyword id="KW-0808">Transferase</keyword>
<accession>P0AG16</accession>
<accession>P00496</accession>
<accession>P78092</accession>
<accession>P78191</accession>
<accession>P78192</accession>
<accession>Q47255</accession>
<accession>Q59425</accession>
<gene>
    <name evidence="1" type="primary">purF</name>
    <name type="ordered locus">b2312</name>
    <name type="ordered locus">JW2309</name>
</gene>